<keyword id="KW-0030">Aminoacyl-tRNA synthetase</keyword>
<keyword id="KW-0067">ATP-binding</keyword>
<keyword id="KW-0963">Cytoplasm</keyword>
<keyword id="KW-0436">Ligase</keyword>
<keyword id="KW-0460">Magnesium</keyword>
<keyword id="KW-0479">Metal-binding</keyword>
<keyword id="KW-0547">Nucleotide-binding</keyword>
<keyword id="KW-0648">Protein biosynthesis</keyword>
<gene>
    <name evidence="1" type="primary">pheS</name>
    <name type="ordered locus">SAV1138</name>
</gene>
<feature type="chain" id="PRO_0000126760" description="Phenylalanine--tRNA ligase alpha subunit">
    <location>
        <begin position="1"/>
        <end position="352"/>
    </location>
</feature>
<feature type="binding site" evidence="1">
    <location>
        <position position="258"/>
    </location>
    <ligand>
        <name>Mg(2+)</name>
        <dbReference type="ChEBI" id="CHEBI:18420"/>
        <note>shared with beta subunit</note>
    </ligand>
</feature>
<proteinExistence type="inferred from homology"/>
<dbReference type="EC" id="6.1.1.20" evidence="1"/>
<dbReference type="EMBL" id="BA000017">
    <property type="protein sequence ID" value="BAB57300.1"/>
    <property type="molecule type" value="Genomic_DNA"/>
</dbReference>
<dbReference type="RefSeq" id="WP_000003566.1">
    <property type="nucleotide sequence ID" value="NC_002758.2"/>
</dbReference>
<dbReference type="SMR" id="P68847"/>
<dbReference type="KEGG" id="sav:SAV1138"/>
<dbReference type="HOGENOM" id="CLU_025086_0_1_9"/>
<dbReference type="PhylomeDB" id="P68847"/>
<dbReference type="Proteomes" id="UP000002481">
    <property type="component" value="Chromosome"/>
</dbReference>
<dbReference type="GO" id="GO:0005737">
    <property type="term" value="C:cytoplasm"/>
    <property type="evidence" value="ECO:0007669"/>
    <property type="project" value="UniProtKB-SubCell"/>
</dbReference>
<dbReference type="GO" id="GO:0005524">
    <property type="term" value="F:ATP binding"/>
    <property type="evidence" value="ECO:0007669"/>
    <property type="project" value="UniProtKB-UniRule"/>
</dbReference>
<dbReference type="GO" id="GO:0140096">
    <property type="term" value="F:catalytic activity, acting on a protein"/>
    <property type="evidence" value="ECO:0007669"/>
    <property type="project" value="UniProtKB-ARBA"/>
</dbReference>
<dbReference type="GO" id="GO:0000287">
    <property type="term" value="F:magnesium ion binding"/>
    <property type="evidence" value="ECO:0007669"/>
    <property type="project" value="UniProtKB-UniRule"/>
</dbReference>
<dbReference type="GO" id="GO:0004826">
    <property type="term" value="F:phenylalanine-tRNA ligase activity"/>
    <property type="evidence" value="ECO:0007669"/>
    <property type="project" value="UniProtKB-UniRule"/>
</dbReference>
<dbReference type="GO" id="GO:0016740">
    <property type="term" value="F:transferase activity"/>
    <property type="evidence" value="ECO:0007669"/>
    <property type="project" value="UniProtKB-ARBA"/>
</dbReference>
<dbReference type="GO" id="GO:0000049">
    <property type="term" value="F:tRNA binding"/>
    <property type="evidence" value="ECO:0007669"/>
    <property type="project" value="InterPro"/>
</dbReference>
<dbReference type="GO" id="GO:0006432">
    <property type="term" value="P:phenylalanyl-tRNA aminoacylation"/>
    <property type="evidence" value="ECO:0007669"/>
    <property type="project" value="UniProtKB-UniRule"/>
</dbReference>
<dbReference type="CDD" id="cd00496">
    <property type="entry name" value="PheRS_alpha_core"/>
    <property type="match status" value="1"/>
</dbReference>
<dbReference type="FunFam" id="3.30.930.10:FF:000003">
    <property type="entry name" value="Phenylalanine--tRNA ligase alpha subunit"/>
    <property type="match status" value="1"/>
</dbReference>
<dbReference type="Gene3D" id="3.30.930.10">
    <property type="entry name" value="Bira Bifunctional Protein, Domain 2"/>
    <property type="match status" value="1"/>
</dbReference>
<dbReference type="HAMAP" id="MF_00281">
    <property type="entry name" value="Phe_tRNA_synth_alpha1"/>
    <property type="match status" value="1"/>
</dbReference>
<dbReference type="InterPro" id="IPR006195">
    <property type="entry name" value="aa-tRNA-synth_II"/>
</dbReference>
<dbReference type="InterPro" id="IPR045864">
    <property type="entry name" value="aa-tRNA-synth_II/BPL/LPL"/>
</dbReference>
<dbReference type="InterPro" id="IPR004529">
    <property type="entry name" value="Phe-tRNA-synth_IIc_asu"/>
</dbReference>
<dbReference type="InterPro" id="IPR004188">
    <property type="entry name" value="Phe-tRNA_ligase_II_N"/>
</dbReference>
<dbReference type="InterPro" id="IPR022911">
    <property type="entry name" value="Phe_tRNA_ligase_alpha1_bac"/>
</dbReference>
<dbReference type="InterPro" id="IPR002319">
    <property type="entry name" value="Phenylalanyl-tRNA_Synthase"/>
</dbReference>
<dbReference type="InterPro" id="IPR010978">
    <property type="entry name" value="tRNA-bd_arm"/>
</dbReference>
<dbReference type="NCBIfam" id="TIGR00468">
    <property type="entry name" value="pheS"/>
    <property type="match status" value="1"/>
</dbReference>
<dbReference type="PANTHER" id="PTHR11538:SF41">
    <property type="entry name" value="PHENYLALANINE--TRNA LIGASE, MITOCHONDRIAL"/>
    <property type="match status" value="1"/>
</dbReference>
<dbReference type="PANTHER" id="PTHR11538">
    <property type="entry name" value="PHENYLALANYL-TRNA SYNTHETASE"/>
    <property type="match status" value="1"/>
</dbReference>
<dbReference type="Pfam" id="PF02912">
    <property type="entry name" value="Phe_tRNA-synt_N"/>
    <property type="match status" value="1"/>
</dbReference>
<dbReference type="Pfam" id="PF01409">
    <property type="entry name" value="tRNA-synt_2d"/>
    <property type="match status" value="1"/>
</dbReference>
<dbReference type="SUPFAM" id="SSF55681">
    <property type="entry name" value="Class II aaRS and biotin synthetases"/>
    <property type="match status" value="1"/>
</dbReference>
<dbReference type="SUPFAM" id="SSF46589">
    <property type="entry name" value="tRNA-binding arm"/>
    <property type="match status" value="1"/>
</dbReference>
<dbReference type="PROSITE" id="PS50862">
    <property type="entry name" value="AA_TRNA_LIGASE_II"/>
    <property type="match status" value="1"/>
</dbReference>
<name>SYFA_STAAM</name>
<reference key="1">
    <citation type="journal article" date="2001" name="Lancet">
        <title>Whole genome sequencing of meticillin-resistant Staphylococcus aureus.</title>
        <authorList>
            <person name="Kuroda M."/>
            <person name="Ohta T."/>
            <person name="Uchiyama I."/>
            <person name="Baba T."/>
            <person name="Yuzawa H."/>
            <person name="Kobayashi I."/>
            <person name="Cui L."/>
            <person name="Oguchi A."/>
            <person name="Aoki K."/>
            <person name="Nagai Y."/>
            <person name="Lian J.-Q."/>
            <person name="Ito T."/>
            <person name="Kanamori M."/>
            <person name="Matsumaru H."/>
            <person name="Maruyama A."/>
            <person name="Murakami H."/>
            <person name="Hosoyama A."/>
            <person name="Mizutani-Ui Y."/>
            <person name="Takahashi N.K."/>
            <person name="Sawano T."/>
            <person name="Inoue R."/>
            <person name="Kaito C."/>
            <person name="Sekimizu K."/>
            <person name="Hirakawa H."/>
            <person name="Kuhara S."/>
            <person name="Goto S."/>
            <person name="Yabuzaki J."/>
            <person name="Kanehisa M."/>
            <person name="Yamashita A."/>
            <person name="Oshima K."/>
            <person name="Furuya K."/>
            <person name="Yoshino C."/>
            <person name="Shiba T."/>
            <person name="Hattori M."/>
            <person name="Ogasawara N."/>
            <person name="Hayashi H."/>
            <person name="Hiramatsu K."/>
        </authorList>
    </citation>
    <scope>NUCLEOTIDE SEQUENCE [LARGE SCALE GENOMIC DNA]</scope>
    <source>
        <strain>Mu50 / ATCC 700699</strain>
    </source>
</reference>
<comment type="catalytic activity">
    <reaction evidence="1">
        <text>tRNA(Phe) + L-phenylalanine + ATP = L-phenylalanyl-tRNA(Phe) + AMP + diphosphate + H(+)</text>
        <dbReference type="Rhea" id="RHEA:19413"/>
        <dbReference type="Rhea" id="RHEA-COMP:9668"/>
        <dbReference type="Rhea" id="RHEA-COMP:9699"/>
        <dbReference type="ChEBI" id="CHEBI:15378"/>
        <dbReference type="ChEBI" id="CHEBI:30616"/>
        <dbReference type="ChEBI" id="CHEBI:33019"/>
        <dbReference type="ChEBI" id="CHEBI:58095"/>
        <dbReference type="ChEBI" id="CHEBI:78442"/>
        <dbReference type="ChEBI" id="CHEBI:78531"/>
        <dbReference type="ChEBI" id="CHEBI:456215"/>
        <dbReference type="EC" id="6.1.1.20"/>
    </reaction>
</comment>
<comment type="cofactor">
    <cofactor evidence="1">
        <name>Mg(2+)</name>
        <dbReference type="ChEBI" id="CHEBI:18420"/>
    </cofactor>
    <text evidence="1">Binds 2 magnesium ions per tetramer.</text>
</comment>
<comment type="subunit">
    <text evidence="1">Tetramer of two alpha and two beta subunits.</text>
</comment>
<comment type="subcellular location">
    <subcellularLocation>
        <location evidence="1">Cytoplasm</location>
    </subcellularLocation>
</comment>
<comment type="similarity">
    <text evidence="1">Belongs to the class-II aminoacyl-tRNA synthetase family. Phe-tRNA synthetase alpha subunit type 1 subfamily.</text>
</comment>
<sequence length="352" mass="40121">MSEQQTMSELKQQALVDINEANDERALQEVKVKYLGKKGSVSGLMKLMKDLPNEEKPAFGQKVNELRQTIQNELDERQQMLVKEKLNKQLAEETIDVSLPGRHIEIGSKHPLTRTIEEIEDLFLGLGYEIVNGYEVEQDHYNFEMLNLPKSHPARDMQDSFYITDEILLRTHTSPVQARTMESRHGQGPVKIICPGKVYRRDSDDATHSHQFTQIEGLVVDKNVKMSDLKGTLELLAKKLFGADREIRLRPSYFPFTEPSVEVDVSCFKCKGKGCNVCKHTGWIEILGAGMVHPNVLEMAGFDSSEYSGFAFGMGPDRIAMLKYGIEDIRHFYTNDVRFLDQFKAVEDRGDM</sequence>
<organism>
    <name type="scientific">Staphylococcus aureus (strain Mu50 / ATCC 700699)</name>
    <dbReference type="NCBI Taxonomy" id="158878"/>
    <lineage>
        <taxon>Bacteria</taxon>
        <taxon>Bacillati</taxon>
        <taxon>Bacillota</taxon>
        <taxon>Bacilli</taxon>
        <taxon>Bacillales</taxon>
        <taxon>Staphylococcaceae</taxon>
        <taxon>Staphylococcus</taxon>
    </lineage>
</organism>
<protein>
    <recommendedName>
        <fullName evidence="1">Phenylalanine--tRNA ligase alpha subunit</fullName>
        <ecNumber evidence="1">6.1.1.20</ecNumber>
    </recommendedName>
    <alternativeName>
        <fullName evidence="1">Phenylalanyl-tRNA synthetase alpha subunit</fullName>
        <shortName evidence="1">PheRS</shortName>
    </alternativeName>
</protein>
<accession>P68847</accession>
<accession>Q99QR1</accession>
<evidence type="ECO:0000255" key="1">
    <source>
        <dbReference type="HAMAP-Rule" id="MF_00281"/>
    </source>
</evidence>